<proteinExistence type="evidence at protein level"/>
<name>TRIA_MECPA</name>
<reference key="1">
    <citation type="journal article" date="1995" name="J. Biol. Chem.">
        <title>Triabin, a highly potent exosite inhibitor of thrombin.</title>
        <authorList>
            <person name="Noeske-Jungblut C."/>
            <person name="Haendler B."/>
            <person name="Donner P."/>
            <person name="Alagon A."/>
            <person name="Possani L.D."/>
            <person name="Schleuning W.-D."/>
        </authorList>
    </citation>
    <scope>NUCLEOTIDE SEQUENCE [MRNA]</scope>
    <scope>PARTIAL PROTEIN SEQUENCE</scope>
    <scope>FUNCTION</scope>
    <source>
        <tissue>Salivary gland</tissue>
    </source>
</reference>
<reference key="2">
    <citation type="journal article" date="1997" name="Thromb. Haemost.">
        <title>Inhibition of thrombin-mediated cellular effects by triabin, a highly potent anion-binding exosite thrombin inhibitor.</title>
        <authorList>
            <person name="Glusa E."/>
            <person name="Bretschneider E."/>
            <person name="Daum J."/>
            <person name="Noeske-Jungblut C."/>
        </authorList>
    </citation>
    <scope>FUNCTION</scope>
</reference>
<reference key="3">
    <citation type="journal article" date="2023" name="Biochimie">
        <title>Functional expression of a thrombin exosite I inhibitor triabin in Escherichia coli and elucidation of the role of key residues in its inhibitory activity.</title>
        <authorList>
            <person name="Mo Z."/>
            <person name="Xiao Z."/>
            <person name="He C."/>
        </authorList>
    </citation>
    <scope>FUNCTION</scope>
    <scope>DISULFIDE BONDS</scope>
    <scope>MUTAGENESIS OF PHE-124; VAL-144; GLU-146 AND ASP-153</scope>
</reference>
<reference key="4">
    <citation type="journal article" date="1997" name="Proc. Natl. Acad. Sci. U.S.A.">
        <title>Structure of the thrombin complex with triabin, a lipocalin-like exosite-binding inhibitor derived from a triatomine bug.</title>
        <authorList>
            <person name="Fuentes-Prior P."/>
            <person name="Noeske-Jungblut C."/>
            <person name="Donner P."/>
            <person name="Schleuning W.-D."/>
            <person name="Huber R."/>
            <person name="Bode W."/>
        </authorList>
    </citation>
    <scope>X-RAY CRYSTALLOGRAPHY (2.6 ANGSTROMS) IN COMPLEX WITH THROMBIN</scope>
    <scope>DISULFIDE BONDS</scope>
</reference>
<sequence>MKTIIAVTIFGILTCAYAAEGDDCSIEKAMGDFKPEEFFNGTWYLAHGPGVTSPAVCQKFTTSGSKGFTQIVEIGYNKFESNVKFQCNQVDNKNGEQYSFKCKSSDNTEFEADFTFISVSYDNFALVCRSITFTSQPKEDDYLVLERTKSDTDPDAKEIC</sequence>
<keyword id="KW-0002">3D-structure</keyword>
<keyword id="KW-1203">Blood coagulation cascade inhibiting toxin</keyword>
<keyword id="KW-0903">Direct protein sequencing</keyword>
<keyword id="KW-1015">Disulfide bond</keyword>
<keyword id="KW-1199">Hemostasis impairing toxin</keyword>
<keyword id="KW-1201">Platelet aggregation inhibiting toxin</keyword>
<keyword id="KW-0646">Protease inhibitor</keyword>
<keyword id="KW-0964">Secreted</keyword>
<keyword id="KW-0722">Serine protease inhibitor</keyword>
<keyword id="KW-0732">Signal</keyword>
<keyword id="KW-0800">Toxin</keyword>
<keyword id="KW-0838">Vasoactive</keyword>
<comment type="function">
    <text evidence="1 2 3">Thrombin inhibitor (PubMed:36580989, PubMed:7499380). Forms a non-covalent complex with thrombin at a molar ratio of 1:1 (PubMed:7499380). Inhibits thrombin-induced platelet aggregation (PubMed:7499380, PubMed:9241757). Prolongs thrombin clotting time and activated partial thromboplastin time (PubMed:7499380). It only minimally suppresses the amidolytic activity of thrombin (PubMed:7499380). Inhibits thrombin-mediated fibrin formation in the host (PubMed:36580989, PubMed:7499380). Inhibits thrombin-induced endothelium-dependent relaxant and contractile responses in host blood vessels (PubMed:9241757). Inhibits thrombin-induced mitogenesis in host vascular smooth muscle cells (PubMed:9241757).</text>
</comment>
<comment type="subcellular location">
    <subcellularLocation>
        <location evidence="10">Secreted</location>
    </subcellularLocation>
</comment>
<comment type="tissue specificity">
    <text evidence="10">Expressed in salivary glands.</text>
</comment>
<comment type="miscellaneous">
    <text>The sequence shown is that of clone TR5.</text>
</comment>
<comment type="similarity">
    <text evidence="9">Belongs to the calycin superfamily. Triabin family.</text>
</comment>
<organism>
    <name type="scientific">Meccus pallidipennis</name>
    <name type="common">Triatomine bug</name>
    <name type="synonym">Triatoma pallidipennis</name>
    <dbReference type="NCBI Taxonomy" id="30077"/>
    <lineage>
        <taxon>Eukaryota</taxon>
        <taxon>Metazoa</taxon>
        <taxon>Ecdysozoa</taxon>
        <taxon>Arthropoda</taxon>
        <taxon>Hexapoda</taxon>
        <taxon>Insecta</taxon>
        <taxon>Pterygota</taxon>
        <taxon>Neoptera</taxon>
        <taxon>Paraneoptera</taxon>
        <taxon>Hemiptera</taxon>
        <taxon>Heteroptera</taxon>
        <taxon>Panheteroptera</taxon>
        <taxon>Cimicomorpha</taxon>
        <taxon>Reduviidae</taxon>
        <taxon>Triatominae</taxon>
        <taxon>Meccus</taxon>
    </lineage>
</organism>
<feature type="signal peptide" evidence="10">
    <location>
        <begin position="1"/>
        <end position="18"/>
    </location>
</feature>
<feature type="chain" id="PRO_0000017994" description="Triabin" evidence="10">
    <location>
        <begin position="19"/>
        <end position="160"/>
    </location>
</feature>
<feature type="disulfide bond" evidence="1 4 11">
    <location>
        <begin position="24"/>
        <end position="128"/>
    </location>
</feature>
<feature type="disulfide bond" evidence="1 4 11">
    <location>
        <begin position="57"/>
        <end position="160"/>
    </location>
</feature>
<feature type="disulfide bond" evidence="1 4 11">
    <location>
        <begin position="87"/>
        <end position="102"/>
    </location>
</feature>
<feature type="sequence variant" description="In clones TR12, TR28 and TR45.">
    <original>I</original>
    <variation>L</variation>
    <location>
        <position position="26"/>
    </location>
</feature>
<feature type="sequence variant" description="In clones TR28 and TR45.">
    <original>G</original>
    <variation>D</variation>
    <location>
        <position position="50"/>
    </location>
</feature>
<feature type="sequence variant" description="In clone TR45.">
    <original>VDNKNG</original>
    <variation>ADKKND</variation>
    <location>
        <begin position="90"/>
        <end position="95"/>
    </location>
</feature>
<feature type="sequence variant" description="In clones TR12 and TR28.">
    <original>G</original>
    <variation>D</variation>
    <location>
        <position position="95"/>
    </location>
</feature>
<feature type="sequence variant" description="In clones TR12, TR28 and TR45.">
    <original>S</original>
    <variation>G</variation>
    <location>
        <position position="104"/>
    </location>
</feature>
<feature type="sequence variant" description="In clones TR12 and TR28.">
    <original>T</original>
    <variation>I</variation>
    <location>
        <position position="132"/>
    </location>
</feature>
<feature type="sequence variant" description="In clones TR12, TR28 and TR45.">
    <original>L</original>
    <variation>F</variation>
    <location>
        <position position="145"/>
    </location>
</feature>
<feature type="sequence variant" description="In clones TR12, TR28 and TR45.">
    <original>K</original>
    <variation>N</variation>
    <location>
        <position position="157"/>
    </location>
</feature>
<feature type="mutagenesis site" description="Significantly decreases inhibitory activity towards thrombin." evidence="1">
    <original>F</original>
    <variation>A</variation>
    <location>
        <position position="124"/>
    </location>
</feature>
<feature type="mutagenesis site" description="Moderately decreases inhibitory activity towards thrombin." evidence="1">
    <original>F</original>
    <variation>L</variation>
    <location>
        <position position="124"/>
    </location>
</feature>
<feature type="mutagenesis site" description="Decreases inhibitory activity towards thrombin." evidence="1">
    <original>V</original>
    <variation>A</variation>
    <location>
        <position position="144"/>
    </location>
</feature>
<feature type="mutagenesis site" description="Decreases inhibitory activity towards thrombin. Significantly decreases inhibitory activity towards thrombin; when associated with N-153." evidence="1">
    <original>E</original>
    <variation>Q</variation>
    <location>
        <position position="146"/>
    </location>
</feature>
<feature type="mutagenesis site" description="Decreases inhibitory activity towards thrombin. Significantly decreases inhibitory activity towards thrombin; when associated with Q-146." evidence="1">
    <original>D</original>
    <variation>N</variation>
    <location>
        <position position="153"/>
    </location>
</feature>
<feature type="helix" evidence="12">
    <location>
        <begin position="24"/>
        <end position="26"/>
    </location>
</feature>
<feature type="helix" evidence="12">
    <location>
        <begin position="35"/>
        <end position="38"/>
    </location>
</feature>
<feature type="strand" evidence="12">
    <location>
        <begin position="39"/>
        <end position="50"/>
    </location>
</feature>
<feature type="strand" evidence="12">
    <location>
        <begin position="54"/>
        <end position="61"/>
    </location>
</feature>
<feature type="strand" evidence="12">
    <location>
        <begin position="63"/>
        <end position="65"/>
    </location>
</feature>
<feature type="strand" evidence="12">
    <location>
        <begin position="69"/>
        <end position="75"/>
    </location>
</feature>
<feature type="strand" evidence="12">
    <location>
        <begin position="84"/>
        <end position="89"/>
    </location>
</feature>
<feature type="turn" evidence="12">
    <location>
        <begin position="94"/>
        <end position="96"/>
    </location>
</feature>
<feature type="strand" evidence="12">
    <location>
        <begin position="98"/>
        <end position="104"/>
    </location>
</feature>
<feature type="strand" evidence="12">
    <location>
        <begin position="110"/>
        <end position="119"/>
    </location>
</feature>
<feature type="strand" evidence="12">
    <location>
        <begin position="123"/>
        <end position="136"/>
    </location>
</feature>
<feature type="strand" evidence="12">
    <location>
        <begin position="140"/>
        <end position="148"/>
    </location>
</feature>
<feature type="strand" evidence="12">
    <location>
        <begin position="151"/>
        <end position="153"/>
    </location>
</feature>
<feature type="helix" evidence="12">
    <location>
        <begin position="156"/>
        <end position="159"/>
    </location>
</feature>
<accession>Q27049</accession>
<accession>Q27046</accession>
<accession>Q27047</accession>
<accession>Q27048</accession>
<evidence type="ECO:0000269" key="1">
    <source>
    </source>
</evidence>
<evidence type="ECO:0000269" key="2">
    <source>
    </source>
</evidence>
<evidence type="ECO:0000269" key="3">
    <source>
    </source>
</evidence>
<evidence type="ECO:0000269" key="4">
    <source>
    </source>
</evidence>
<evidence type="ECO:0000303" key="5">
    <source>
    </source>
</evidence>
<evidence type="ECO:0000303" key="6">
    <source>
    </source>
</evidence>
<evidence type="ECO:0000303" key="7">
    <source>
    </source>
</evidence>
<evidence type="ECO:0000303" key="8">
    <source>
    </source>
</evidence>
<evidence type="ECO:0000305" key="9"/>
<evidence type="ECO:0000305" key="10">
    <source>
    </source>
</evidence>
<evidence type="ECO:0007744" key="11">
    <source>
        <dbReference type="PDB" id="1AVG"/>
    </source>
</evidence>
<evidence type="ECO:0007829" key="12">
    <source>
        <dbReference type="PDB" id="1AVG"/>
    </source>
</evidence>
<dbReference type="EMBL" id="X80246">
    <property type="protein sequence ID" value="CAA56540.1"/>
    <property type="molecule type" value="mRNA"/>
</dbReference>
<dbReference type="EMBL" id="X80247">
    <property type="protein sequence ID" value="CAA56541.1"/>
    <property type="molecule type" value="mRNA"/>
</dbReference>
<dbReference type="EMBL" id="X80248">
    <property type="protein sequence ID" value="CAA56542.1"/>
    <property type="molecule type" value="mRNA"/>
</dbReference>
<dbReference type="EMBL" id="X80249">
    <property type="protein sequence ID" value="CAA56543.1"/>
    <property type="molecule type" value="mRNA"/>
</dbReference>
<dbReference type="PDB" id="1AVG">
    <property type="method" value="X-ray"/>
    <property type="resolution" value="2.60 A"/>
    <property type="chains" value="I=19-160"/>
</dbReference>
<dbReference type="PDBsum" id="1AVG"/>
<dbReference type="SMR" id="Q27049"/>
<dbReference type="DIP" id="DIP-6100N"/>
<dbReference type="IntAct" id="Q27049">
    <property type="interactions" value="1"/>
</dbReference>
<dbReference type="MEROPS" id="I59.001"/>
<dbReference type="EvolutionaryTrace" id="Q27049"/>
<dbReference type="GO" id="GO:0005576">
    <property type="term" value="C:extracellular region"/>
    <property type="evidence" value="ECO:0007669"/>
    <property type="project" value="UniProtKB-SubCell"/>
</dbReference>
<dbReference type="GO" id="GO:0004867">
    <property type="term" value="F:serine-type endopeptidase inhibitor activity"/>
    <property type="evidence" value="ECO:0007669"/>
    <property type="project" value="UniProtKB-KW"/>
</dbReference>
<dbReference type="GO" id="GO:0090729">
    <property type="term" value="F:toxin activity"/>
    <property type="evidence" value="ECO:0007669"/>
    <property type="project" value="UniProtKB-KW"/>
</dbReference>
<dbReference type="GO" id="GO:0097746">
    <property type="term" value="P:blood vessel diameter maintenance"/>
    <property type="evidence" value="ECO:0007669"/>
    <property type="project" value="UniProtKB-KW"/>
</dbReference>
<dbReference type="GO" id="GO:0030682">
    <property type="term" value="P:symbiont-mediated perturbation of host defenses"/>
    <property type="evidence" value="ECO:0007669"/>
    <property type="project" value="InterPro"/>
</dbReference>
<dbReference type="CDD" id="cd19423">
    <property type="entry name" value="lipocalin_LTBP1-like"/>
    <property type="match status" value="1"/>
</dbReference>
<dbReference type="Gene3D" id="2.40.128.20">
    <property type="match status" value="1"/>
</dbReference>
<dbReference type="InterPro" id="IPR012674">
    <property type="entry name" value="Calycin"/>
</dbReference>
<dbReference type="InterPro" id="IPR005657">
    <property type="entry name" value="Triabi/Procalin"/>
</dbReference>
<dbReference type="Pfam" id="PF03973">
    <property type="entry name" value="Triabin"/>
    <property type="match status" value="1"/>
</dbReference>
<dbReference type="SUPFAM" id="SSF50814">
    <property type="entry name" value="Lipocalins"/>
    <property type="match status" value="1"/>
</dbReference>
<protein>
    <recommendedName>
        <fullName evidence="5 6 7 8">Triabin</fullName>
    </recommendedName>
    <alternativeName>
        <fullName evidence="6 8">Thrombin inhibitor</fullName>
    </alternativeName>
</protein>